<gene>
    <name evidence="1" type="primary">recO</name>
    <name type="ordered locus">Sez_0020</name>
</gene>
<reference key="1">
    <citation type="journal article" date="2008" name="PLoS ONE">
        <title>Genome sequence of a lancefield group C Streptococcus zooepidemicus strain causing epidemic nephritis: new information about an old disease.</title>
        <authorList>
            <person name="Beres S.B."/>
            <person name="Sesso R."/>
            <person name="Pinto S.W.L."/>
            <person name="Hoe N.P."/>
            <person name="Porcella S.F."/>
            <person name="Deleo F.R."/>
            <person name="Musser J.M."/>
        </authorList>
    </citation>
    <scope>NUCLEOTIDE SEQUENCE [LARGE SCALE GENOMIC DNA]</scope>
    <source>
        <strain>MGCS10565</strain>
    </source>
</reference>
<feature type="chain" id="PRO_1000099413" description="DNA repair protein RecO">
    <location>
        <begin position="1"/>
        <end position="256"/>
    </location>
</feature>
<keyword id="KW-0227">DNA damage</keyword>
<keyword id="KW-0233">DNA recombination</keyword>
<keyword id="KW-0234">DNA repair</keyword>
<organism>
    <name type="scientific">Streptococcus equi subsp. zooepidemicus (strain MGCS10565)</name>
    <dbReference type="NCBI Taxonomy" id="552526"/>
    <lineage>
        <taxon>Bacteria</taxon>
        <taxon>Bacillati</taxon>
        <taxon>Bacillota</taxon>
        <taxon>Bacilli</taxon>
        <taxon>Lactobacillales</taxon>
        <taxon>Streptococcaceae</taxon>
        <taxon>Streptococcus</taxon>
    </lineage>
</organism>
<dbReference type="EMBL" id="CP001129">
    <property type="protein sequence ID" value="ACG61407.1"/>
    <property type="molecule type" value="Genomic_DNA"/>
</dbReference>
<dbReference type="RefSeq" id="WP_012514700.1">
    <property type="nucleotide sequence ID" value="NC_011134.1"/>
</dbReference>
<dbReference type="SMR" id="B4U5G6"/>
<dbReference type="KEGG" id="sez:Sez_0020"/>
<dbReference type="HOGENOM" id="CLU_066632_4_0_9"/>
<dbReference type="Proteomes" id="UP000001873">
    <property type="component" value="Chromosome"/>
</dbReference>
<dbReference type="GO" id="GO:0043590">
    <property type="term" value="C:bacterial nucleoid"/>
    <property type="evidence" value="ECO:0007669"/>
    <property type="project" value="TreeGrafter"/>
</dbReference>
<dbReference type="GO" id="GO:0006310">
    <property type="term" value="P:DNA recombination"/>
    <property type="evidence" value="ECO:0007669"/>
    <property type="project" value="UniProtKB-UniRule"/>
</dbReference>
<dbReference type="GO" id="GO:0006302">
    <property type="term" value="P:double-strand break repair"/>
    <property type="evidence" value="ECO:0007669"/>
    <property type="project" value="TreeGrafter"/>
</dbReference>
<dbReference type="Gene3D" id="2.40.50.140">
    <property type="entry name" value="Nucleic acid-binding proteins"/>
    <property type="match status" value="1"/>
</dbReference>
<dbReference type="Gene3D" id="1.20.1440.120">
    <property type="entry name" value="Recombination protein O, C-terminal domain"/>
    <property type="match status" value="1"/>
</dbReference>
<dbReference type="HAMAP" id="MF_00201">
    <property type="entry name" value="RecO"/>
    <property type="match status" value="1"/>
</dbReference>
<dbReference type="InterPro" id="IPR037278">
    <property type="entry name" value="ARFGAP/RecO"/>
</dbReference>
<dbReference type="InterPro" id="IPR022572">
    <property type="entry name" value="DNA_rep/recomb_RecO_N"/>
</dbReference>
<dbReference type="InterPro" id="IPR012340">
    <property type="entry name" value="NA-bd_OB-fold"/>
</dbReference>
<dbReference type="InterPro" id="IPR003717">
    <property type="entry name" value="RecO"/>
</dbReference>
<dbReference type="InterPro" id="IPR042242">
    <property type="entry name" value="RecO_C"/>
</dbReference>
<dbReference type="NCBIfam" id="TIGR00613">
    <property type="entry name" value="reco"/>
    <property type="match status" value="1"/>
</dbReference>
<dbReference type="PANTHER" id="PTHR33991">
    <property type="entry name" value="DNA REPAIR PROTEIN RECO"/>
    <property type="match status" value="1"/>
</dbReference>
<dbReference type="PANTHER" id="PTHR33991:SF1">
    <property type="entry name" value="DNA REPAIR PROTEIN RECO"/>
    <property type="match status" value="1"/>
</dbReference>
<dbReference type="Pfam" id="PF02565">
    <property type="entry name" value="RecO_C"/>
    <property type="match status" value="1"/>
</dbReference>
<dbReference type="Pfam" id="PF11967">
    <property type="entry name" value="RecO_N"/>
    <property type="match status" value="1"/>
</dbReference>
<dbReference type="SUPFAM" id="SSF57863">
    <property type="entry name" value="ArfGap/RecO-like zinc finger"/>
    <property type="match status" value="1"/>
</dbReference>
<dbReference type="SUPFAM" id="SSF50249">
    <property type="entry name" value="Nucleic acid-binding proteins"/>
    <property type="match status" value="1"/>
</dbReference>
<sequence length="256" mass="29827">MRIQRSLGIVLYNKNYREDDKLVKIFTEAAGKRMFFVKHIGRSKLAPVVQPLTAADFLLKINDSSLSYIEDYNQVEAYRHINEDFFRLSYASYVLALADAAIPDNEPDPQLFAFLKKTLDLIEEGLDYDILTNIFEIQILDRFGVRMNFHDCVFCHSTNLPFDFSHKYSGVLCPQHYHEDEGRYGLDPNVIYLINRFQTINIDELKTISVNADMKKKLRLFIDALYEDYVGIRLKSKVFIDDLAKWGDIMKNKQGL</sequence>
<comment type="function">
    <text evidence="1">Involved in DNA repair and RecF pathway recombination.</text>
</comment>
<comment type="similarity">
    <text evidence="1">Belongs to the RecO family.</text>
</comment>
<proteinExistence type="inferred from homology"/>
<protein>
    <recommendedName>
        <fullName evidence="1">DNA repair protein RecO</fullName>
    </recommendedName>
    <alternativeName>
        <fullName evidence="1">Recombination protein O</fullName>
    </alternativeName>
</protein>
<accession>B4U5G6</accession>
<evidence type="ECO:0000255" key="1">
    <source>
        <dbReference type="HAMAP-Rule" id="MF_00201"/>
    </source>
</evidence>
<name>RECO_STREM</name>